<accession>A0A242DI27</accession>
<organism>
    <name type="scientific">Enterococcus sp. (strain 3G1_DIV0629)</name>
    <dbReference type="NCBI Taxonomy" id="1834176"/>
    <lineage>
        <taxon>Bacteria</taxon>
        <taxon>Bacillati</taxon>
        <taxon>Bacillota</taxon>
        <taxon>Bacilli</taxon>
        <taxon>Lactobacillales</taxon>
        <taxon>Enterococcaceae</taxon>
        <taxon>Enterococcus</taxon>
    </lineage>
</organism>
<proteinExistence type="evidence at protein level"/>
<comment type="function">
    <text evidence="1 5">Strongly resembles a botulinum-type toxin, with the appropriate domains and residues to have proteolytic function, although its C-terminus (which binds to a eukaryotic host cell) is different enough from clostrial botulinum toxins that it might bind another cell target (PubMed:29323697). Might be a precursor of a toxin that binds to an unknown eukaryotic cell receptor(s), and be taken up into the host cell via the endocytic pathway. When the pH of the putative toxin-containing endosome drops a structural rearrangement occurs so that the N-terminus of the heavy chain forms pores that allows the light chain to translocate into the cytosol. Once in the cytosol the disulfide bond linking the 2 subunits is reduced and light chain cleaves its target protein (By similarity).</text>
</comment>
<comment type="catalytic activity">
    <reaction evidence="1">
        <text>Limited hydrolysis of proteins of the neuroexocytosis apparatus, synaptobrevins, SNAP25 or syntaxin. No detected action on small molecule substrates.</text>
        <dbReference type="EC" id="3.4.24.69"/>
    </reaction>
</comment>
<comment type="cofactor">
    <cofactor evidence="1">
        <name>Zn(2+)</name>
        <dbReference type="ChEBI" id="CHEBI:29105"/>
    </cofactor>
    <text evidence="1">Binds 1 zinc ion per subunit (By similarity).</text>
</comment>
<comment type="subunit">
    <text evidence="1">Might be a disulfide-linked heterodimer of a light chain (LC) and heavy chain (HC).</text>
</comment>
<comment type="subcellular location">
    <molecule>Botulinum-like toxin eBoNT/J</molecule>
    <subcellularLocation>
        <location evidence="1">Secreted</location>
    </subcellularLocation>
</comment>
<comment type="subcellular location">
    <molecule>Botulinum-like toxin eBoNT/J light chain</molecule>
    <subcellularLocation>
        <location evidence="1">Secreted</location>
    </subcellularLocation>
    <subcellularLocation>
        <location evidence="1">Host cytoplasm</location>
        <location evidence="1">Host cytosol</location>
    </subcellularLocation>
</comment>
<comment type="subcellular location">
    <molecule>Botulinum-like toxin eBoNT/J heavy chain</molecule>
    <subcellularLocation>
        <location evidence="1">Secreted</location>
    </subcellularLocation>
    <subcellularLocation>
        <location evidence="1">Host cell membrane</location>
    </subcellularLocation>
    <subcellularLocation>
        <location evidence="4">Host cytoplasmic vesicle membrane</location>
        <topology evidence="1">Multi-pass membrane protein</topology>
    </subcellularLocation>
</comment>
<comment type="domain">
    <text>The light chain (LC) has protease activity. HC has 3 functional domains; the translocation domain (TD) and the receptor-binding domain (RBD) which is further subdivided into N- and C-terminal domains (N-RBD and C-RBD). The N-terminus of the TD wraps an extended belt around the perimeter of the light chain, protecting Zn(2+) in the active site and may be a pseudosubstrate inhibitor which serves as an intramolecular chaperone for the LC prior to its translocation into the host cytosol. The RBD binds transiently exposed coreceptors on the host presynaptic cell membrane.</text>
</comment>
<comment type="miscellaneous">
    <text evidence="4">There are seven antigenically distinct forms of botulinum neurotoxin: Types A, B, C, D, E, F, and G; this protein has not been tested seriologically. New subtypes are quite frequent.</text>
</comment>
<comment type="miscellaneous">
    <text evidence="3">This strain was isolated from cow feces in South Carolina, USA, but whether the cattle were infected with botulism is not known. This locus includes a number of other genes usually associated with the botulinum neurotoxin cluster in Clostridia (botR, hemagglutinin genes and p47 proteins), which might permit the toxin to survive in a host.</text>
</comment>
<comment type="similarity">
    <text evidence="4">Belongs to the peptidase M27 family.</text>
</comment>
<keyword id="KW-0002">3D-structure</keyword>
<keyword id="KW-1015">Disulfide bond</keyword>
<keyword id="KW-1032">Host cell membrane</keyword>
<keyword id="KW-1035">Host cytoplasm</keyword>
<keyword id="KW-1036">Host cytoplasmic vesicle</keyword>
<keyword id="KW-1043">Host membrane</keyword>
<keyword id="KW-0378">Hydrolase</keyword>
<keyword id="KW-0472">Membrane</keyword>
<keyword id="KW-0479">Metal-binding</keyword>
<keyword id="KW-0482">Metalloprotease</keyword>
<keyword id="KW-0528">Neurotoxin</keyword>
<keyword id="KW-0645">Protease</keyword>
<keyword id="KW-0964">Secreted</keyword>
<keyword id="KW-0800">Toxin</keyword>
<keyword id="KW-0862">Zinc</keyword>
<protein>
    <recommendedName>
        <fullName evidence="3">Botulinum-like toxin eBoNT/J</fullName>
        <shortName evidence="3">eBoNT/J</shortName>
    </recommendedName>
    <component>
        <recommendedName>
            <fullName>Botulinum-like toxin eBoNT/J light chain</fullName>
            <shortName>LC</shortName>
            <ecNumber evidence="4">3.4.24.69</ecNumber>
        </recommendedName>
    </component>
    <component>
        <recommendedName>
            <fullName>Botulinum-like toxin eBoNT/J heavy chain</fullName>
            <shortName>HC</shortName>
        </recommendedName>
    </component>
</protein>
<gene>
    <name type="ORF">A5816_002916</name>
</gene>
<evidence type="ECO:0000250" key="1">
    <source>
        <dbReference type="UniProtKB" id="P0DPI0"/>
    </source>
</evidence>
<evidence type="ECO:0000255" key="2">
    <source>
        <dbReference type="PROSITE-ProRule" id="PRU10095"/>
    </source>
</evidence>
<evidence type="ECO:0000303" key="3">
    <source>
    </source>
</evidence>
<evidence type="ECO:0000305" key="4"/>
<evidence type="ECO:0000305" key="5">
    <source>
    </source>
</evidence>
<evidence type="ECO:0007829" key="6">
    <source>
        <dbReference type="PDB" id="8OW8"/>
    </source>
</evidence>
<feature type="chain" id="PRO_0000444915" description="Botulinum-like toxin eBoNT/J">
    <location>
        <begin position="1"/>
        <end position="1279"/>
    </location>
</feature>
<feature type="chain" id="PRO_0000444916" description="Botulinum-like toxin eBoNT/J light chain">
    <location>
        <begin position="1"/>
        <end position="434"/>
    </location>
</feature>
<feature type="chain" id="PRO_0000444917" description="Botulinum-like toxin eBoNT/J heavy chain">
    <location>
        <begin position="435"/>
        <end position="1279"/>
    </location>
</feature>
<feature type="region of interest" description="Translocation domain (TD)" evidence="5">
    <location>
        <begin position="435"/>
        <end position="843"/>
    </location>
</feature>
<feature type="region of interest" description="Belt; not required for channel formation" evidence="1">
    <location>
        <begin position="476"/>
        <end position="525"/>
    </location>
</feature>
<feature type="region of interest" description="N-terminus of receptor binding domain (N-RBD)" evidence="1">
    <location>
        <begin position="860"/>
        <end position="1080"/>
    </location>
</feature>
<feature type="region of interest" description="C-terminus of receptor binding domain (C-RBD)" evidence="1">
    <location>
        <begin position="1081"/>
        <end position="1279"/>
    </location>
</feature>
<feature type="short sequence motif" description="Host ganglioside-binding motif" evidence="1 5">
    <location>
        <begin position="1250"/>
        <end position="1253"/>
    </location>
</feature>
<feature type="active site" evidence="1 2">
    <location>
        <position position="226"/>
    </location>
</feature>
<feature type="binding site" evidence="1 2 5">
    <location>
        <position position="225"/>
    </location>
    <ligand>
        <name>Zn(2+)</name>
        <dbReference type="ChEBI" id="CHEBI:29105"/>
        <note>catalytic</note>
    </ligand>
</feature>
<feature type="binding site" evidence="1 2 5">
    <location>
        <position position="229"/>
    </location>
    <ligand>
        <name>Zn(2+)</name>
        <dbReference type="ChEBI" id="CHEBI:29105"/>
        <note>catalytic</note>
    </ligand>
</feature>
<feature type="binding site" evidence="1 5">
    <location>
        <position position="269"/>
    </location>
    <ligand>
        <name>Zn(2+)</name>
        <dbReference type="ChEBI" id="CHEBI:29105"/>
        <note>catalytic</note>
    </ligand>
</feature>
<feature type="disulfide bond" description="Interchain (between light and heavy chains)" evidence="1 5">
    <location>
        <begin position="424"/>
        <end position="438"/>
    </location>
</feature>
<feature type="strand" evidence="6">
    <location>
        <begin position="15"/>
        <end position="22"/>
    </location>
</feature>
<feature type="turn" evidence="6">
    <location>
        <begin position="24"/>
        <end position="27"/>
    </location>
</feature>
<feature type="turn" evidence="6">
    <location>
        <begin position="35"/>
        <end position="38"/>
    </location>
</feature>
<feature type="strand" evidence="6">
    <location>
        <begin position="42"/>
        <end position="48"/>
    </location>
</feature>
<feature type="strand" evidence="6">
    <location>
        <begin position="51"/>
        <end position="57"/>
    </location>
</feature>
<feature type="helix" evidence="6">
    <location>
        <begin position="62"/>
        <end position="64"/>
    </location>
</feature>
<feature type="turn" evidence="6">
    <location>
        <begin position="81"/>
        <end position="84"/>
    </location>
</feature>
<feature type="helix" evidence="6">
    <location>
        <begin position="87"/>
        <end position="104"/>
    </location>
</feature>
<feature type="helix" evidence="6">
    <location>
        <begin position="108"/>
        <end position="119"/>
    </location>
</feature>
<feature type="helix" evidence="6">
    <location>
        <begin position="135"/>
        <end position="137"/>
    </location>
</feature>
<feature type="strand" evidence="6">
    <location>
        <begin position="138"/>
        <end position="142"/>
    </location>
</feature>
<feature type="strand" evidence="6">
    <location>
        <begin position="148"/>
        <end position="153"/>
    </location>
</feature>
<feature type="strand" evidence="6">
    <location>
        <begin position="155"/>
        <end position="160"/>
    </location>
</feature>
<feature type="strand" evidence="6">
    <location>
        <begin position="169"/>
        <end position="174"/>
    </location>
</feature>
<feature type="helix" evidence="6">
    <location>
        <begin position="175"/>
        <end position="178"/>
    </location>
</feature>
<feature type="strand" evidence="6">
    <location>
        <begin position="179"/>
        <end position="181"/>
    </location>
</feature>
<feature type="strand" evidence="6">
    <location>
        <begin position="185"/>
        <end position="188"/>
    </location>
</feature>
<feature type="strand" evidence="6">
    <location>
        <begin position="191"/>
        <end position="198"/>
    </location>
</feature>
<feature type="helix" evidence="6">
    <location>
        <begin position="199"/>
        <end position="201"/>
    </location>
</feature>
<feature type="strand" evidence="6">
    <location>
        <begin position="213"/>
        <end position="215"/>
    </location>
</feature>
<feature type="helix" evidence="6">
    <location>
        <begin position="219"/>
        <end position="235"/>
    </location>
</feature>
<feature type="turn" evidence="6">
    <location>
        <begin position="240"/>
        <end position="242"/>
    </location>
</feature>
<feature type="strand" evidence="6">
    <location>
        <begin position="244"/>
        <end position="247"/>
    </location>
</feature>
<feature type="strand" evidence="6">
    <location>
        <begin position="263"/>
        <end position="266"/>
    </location>
</feature>
<feature type="helix" evidence="6">
    <location>
        <begin position="267"/>
        <end position="273"/>
    </location>
</feature>
<feature type="helix" evidence="6">
    <location>
        <begin position="278"/>
        <end position="304"/>
    </location>
</feature>
<feature type="helix" evidence="6">
    <location>
        <begin position="313"/>
        <end position="321"/>
    </location>
</feature>
<feature type="strand" evidence="6">
    <location>
        <begin position="325"/>
        <end position="328"/>
    </location>
</feature>
<feature type="strand" evidence="6">
    <location>
        <begin position="331"/>
        <end position="334"/>
    </location>
</feature>
<feature type="helix" evidence="6">
    <location>
        <begin position="336"/>
        <end position="349"/>
    </location>
</feature>
<feature type="helix" evidence="6">
    <location>
        <begin position="352"/>
        <end position="358"/>
    </location>
</feature>
<feature type="strand" evidence="6">
    <location>
        <begin position="374"/>
        <end position="377"/>
    </location>
</feature>
<feature type="turn" evidence="6">
    <location>
        <begin position="388"/>
        <end position="390"/>
    </location>
</feature>
<feature type="turn" evidence="6">
    <location>
        <begin position="392"/>
        <end position="395"/>
    </location>
</feature>
<feature type="helix" evidence="6">
    <location>
        <begin position="400"/>
        <end position="402"/>
    </location>
</feature>
<feature type="strand" evidence="6">
    <location>
        <begin position="410"/>
        <end position="412"/>
    </location>
</feature>
<dbReference type="EC" id="3.4.24.69" evidence="4"/>
<dbReference type="EMBL" id="NGLI01000004">
    <property type="protein sequence ID" value="OTO22244.1"/>
    <property type="molecule type" value="Genomic_DNA"/>
</dbReference>
<dbReference type="RefSeq" id="WP_086311652.1">
    <property type="nucleotide sequence ID" value="NZ_NGLI01000004.1"/>
</dbReference>
<dbReference type="PDB" id="8OW8">
    <property type="method" value="X-ray"/>
    <property type="resolution" value="2.00 A"/>
    <property type="chains" value="A=1-425"/>
</dbReference>
<dbReference type="PDBsum" id="8OW8"/>
<dbReference type="SMR" id="A0A242DI27"/>
<dbReference type="Proteomes" id="UP000194867">
    <property type="component" value="Unassembled WGS sequence"/>
</dbReference>
<dbReference type="GO" id="GO:0005576">
    <property type="term" value="C:extracellular region"/>
    <property type="evidence" value="ECO:0007669"/>
    <property type="project" value="UniProtKB-SubCell"/>
</dbReference>
<dbReference type="GO" id="GO:0044162">
    <property type="term" value="C:host cell cytoplasmic vesicle membrane"/>
    <property type="evidence" value="ECO:0007669"/>
    <property type="project" value="UniProtKB-SubCell"/>
</dbReference>
<dbReference type="GO" id="GO:0044164">
    <property type="term" value="C:host cell cytosol"/>
    <property type="evidence" value="ECO:0007669"/>
    <property type="project" value="UniProtKB-SubCell"/>
</dbReference>
<dbReference type="GO" id="GO:0020002">
    <property type="term" value="C:host cell plasma membrane"/>
    <property type="evidence" value="ECO:0007669"/>
    <property type="project" value="UniProtKB-SubCell"/>
</dbReference>
<dbReference type="GO" id="GO:0016020">
    <property type="term" value="C:membrane"/>
    <property type="evidence" value="ECO:0007669"/>
    <property type="project" value="UniProtKB-KW"/>
</dbReference>
<dbReference type="GO" id="GO:0004222">
    <property type="term" value="F:metalloendopeptidase activity"/>
    <property type="evidence" value="ECO:0007669"/>
    <property type="project" value="UniProtKB-EC"/>
</dbReference>
<dbReference type="GO" id="GO:0008320">
    <property type="term" value="F:protein transmembrane transporter activity"/>
    <property type="evidence" value="ECO:0007669"/>
    <property type="project" value="InterPro"/>
</dbReference>
<dbReference type="GO" id="GO:0090729">
    <property type="term" value="F:toxin activity"/>
    <property type="evidence" value="ECO:0007669"/>
    <property type="project" value="UniProtKB-KW"/>
</dbReference>
<dbReference type="GO" id="GO:0008270">
    <property type="term" value="F:zinc ion binding"/>
    <property type="evidence" value="ECO:0007669"/>
    <property type="project" value="InterPro"/>
</dbReference>
<dbReference type="GO" id="GO:0006508">
    <property type="term" value="P:proteolysis"/>
    <property type="evidence" value="ECO:0007669"/>
    <property type="project" value="UniProtKB-KW"/>
</dbReference>
<dbReference type="CDD" id="cd23396">
    <property type="entry name" value="Toxin_R_bind_C_BoNTX_like"/>
    <property type="match status" value="1"/>
</dbReference>
<dbReference type="Gene3D" id="2.60.120.200">
    <property type="match status" value="1"/>
</dbReference>
<dbReference type="Gene3D" id="2.80.10.50">
    <property type="match status" value="1"/>
</dbReference>
<dbReference type="Gene3D" id="1.20.1120.10">
    <property type="entry name" value="Clostridium botulinum neurotoxin b, 'coiled-coil' domain"/>
    <property type="match status" value="1"/>
</dbReference>
<dbReference type="Gene3D" id="3.90.1240.10">
    <property type="entry name" value="Metalloproteases ('zincins'), catalytic domain like"/>
    <property type="match status" value="1"/>
</dbReference>
<dbReference type="InterPro" id="IPR000395">
    <property type="entry name" value="Bot/tetX_LC"/>
</dbReference>
<dbReference type="InterPro" id="IPR036248">
    <property type="entry name" value="Clostridium_toxin_transloc"/>
</dbReference>
<dbReference type="InterPro" id="IPR013320">
    <property type="entry name" value="ConA-like_dom_sf"/>
</dbReference>
<dbReference type="InterPro" id="IPR011065">
    <property type="entry name" value="Kunitz_inhibitor_STI-like_sf"/>
</dbReference>
<dbReference type="InterPro" id="IPR012928">
    <property type="entry name" value="Toxin_rcpt-bd_N"/>
</dbReference>
<dbReference type="InterPro" id="IPR012500">
    <property type="entry name" value="Toxin_trans"/>
</dbReference>
<dbReference type="Pfam" id="PF01742">
    <property type="entry name" value="Peptidase_M27"/>
    <property type="match status" value="1"/>
</dbReference>
<dbReference type="Pfam" id="PF07953">
    <property type="entry name" value="Toxin_R_bind_N"/>
    <property type="match status" value="1"/>
</dbReference>
<dbReference type="Pfam" id="PF07952">
    <property type="entry name" value="Toxin_trans"/>
    <property type="match status" value="1"/>
</dbReference>
<dbReference type="PRINTS" id="PR00760">
    <property type="entry name" value="BONTOXILYSIN"/>
</dbReference>
<dbReference type="SUPFAM" id="SSF58091">
    <property type="entry name" value="Clostridium neurotoxins, 'coiled-coil' domain"/>
    <property type="match status" value="1"/>
</dbReference>
<dbReference type="SUPFAM" id="SSF49899">
    <property type="entry name" value="Concanavalin A-like lectins/glucanases"/>
    <property type="match status" value="1"/>
</dbReference>
<dbReference type="SUPFAM" id="SSF55486">
    <property type="entry name" value="Metalloproteases ('zincins'), catalytic domain"/>
    <property type="match status" value="1"/>
</dbReference>
<dbReference type="SUPFAM" id="SSF50386">
    <property type="entry name" value="STI-like"/>
    <property type="match status" value="1"/>
</dbReference>
<dbReference type="PROSITE" id="PS00142">
    <property type="entry name" value="ZINC_PROTEASE"/>
    <property type="match status" value="1"/>
</dbReference>
<sequence length="1279" mass="147267">MVTINDLHYSDPIDEDNIINMRIPLYDLEVDDQFINHNVPDLKAFQVFPNVWVVPERYTFYSTMKNLDAPANPSRSSYYDPTYLQSDAEKEVFLQQMILLFKRINSTQEGQQFLNLLSRSIPVPYESNGDVAMGTTQVIKQMDDKGNVLKHRRAHIIIYGPGPDLMAKGSKALTKSRETGRGCMAEIYFSPMYHKTYSTKLTNKNSLVDKSVQEFVPDPAVTLIHELCHGLHALYGIDLGNVGSWEFNSNPNSLFSSWFSSKEAVNFEEVMTFGGEDVKVIKSEIDKKIPGILNLIKTTVEPIINKITDPHDEMLQCLQSKYPSLKGTLGQFFFDDTQLEKDIRDLWMVMNETMFAENLKALTRARYLVPKVENIVQVDILSPNVYTIDKGFNHLSKGFKGQSVSQSYFRKISALARGAVVRACPNPHFSSQRGLSSCIEILEDDLFIMSSKDSFTDTDFSEPSVGPVSYKAKKGADTILDSTLSNYDFSKEINFTSTVPIITVEDPLETDEDVPVISEDRTVYVDDYTTFHFLEAQKIGKEVVPTQTKVVFTTNMEEALFDSKKVYTVFENTASRINEAGTGIANGMMFYQWLKGIVQDFTEEATQKDTFDKISDVTMIVPYLGNILNIGNDIRKGDFMGAVELGGVTILLEAIPELTLPVLIGLTIIEDELEKEQVSQTVYNVLDKRDEKWEEVYGFVKQQWWWMVHTQFETRILHAYQALNHQVEAIKANMTYQLANYRGNQEDKELLEKAIDDTLQSLYYAVDQAMHNIKRFLIQSSKSYLLNQMLPKTKEQLLAFDQQTLRNVNDFINKNQGVLGESLAKDLKKKVEKRLTSLPVFNLEDLPISEFEDLIHSHEIDIQDSEVLNIGVNNGKIQDLSGENTPLTLGENLHIVNGRDNQAVRLNNQLDSKLEIQSRPNIHFTAFEDFSISIWIRCSMLRNNRNRGQKYTIIQQFNKYGWQLAIQDSVFVWTLHDTFNNQIQLTSGSALTNKNYLLQNFWLHITVTNKRSEKSRLYINGVLQDQKDISVLGNCHPKEPILFSIQDNSDPNYFVRFEQFNVYRKALTDSEVNRLYWKYFEGSYLRDVWGERLTYNRDYYMQLSTLPGRGIKREYRTWSGFDYIILSELGTQKIPTHEVTYPKLYQGQKITIHSDGKNLEPHVKSNKNIRLKIDDFYIGVVNPFKLPEWRPESGAYVVTTYNHAEDLCLYFRTRSSSQSLYYGQLIMNDGRNKSLLNYTLKGSTYWIWSSAWYYENYNTSSKTAGNWYFIPVDEGWKED</sequence>
<name>BXJ_ENTS3</name>
<reference key="1">
    <citation type="submission" date="2017-05" db="EMBL/GenBank/DDBJ databases">
        <title>The Genome Sequence of Enterococcus sp. 3G1_DIV0629.</title>
        <authorList>
            <consortium name="The Broad Institute Genomics Platform"/>
            <consortium name="The Broad Institute Genomic Center for Infectious Diseases"/>
            <person name="Earl A."/>
            <person name="Manson A."/>
            <person name="Schwartman J."/>
            <person name="Gilmore M."/>
            <person name="Abouelleil A."/>
            <person name="Cao P."/>
            <person name="Chapman S."/>
            <person name="Cusick C."/>
            <person name="Shea T."/>
            <person name="Young S."/>
            <person name="Neafsey D."/>
            <person name="Nusbaum C."/>
            <person name="Birren B."/>
        </authorList>
    </citation>
    <scope>NUCLEOTIDE SEQUENCE [LARGE SCALE GENOMIC DNA]</scope>
    <source>
        <strain>3G1_DIV0629</strain>
    </source>
</reference>
<reference key="2">
    <citation type="journal article" date="2018" name="FEBS Lett.">
        <title>Identification of a novel botulinum neurotoxin gene cluster in Enterococcus.</title>
        <authorList>
            <person name="Brunt J."/>
            <person name="Carter A.T."/>
            <person name="Stringer S.C."/>
            <person name="Peck M.W."/>
        </authorList>
    </citation>
    <scope>DISCUSSION OF SEQUENCE</scope>
    <source>
        <strain>3G1_DIV0629</strain>
    </source>
</reference>